<reference key="1">
    <citation type="journal article" date="2011" name="MBio">
        <title>Novel metabolic attributes of the genus Cyanothece, comprising a group of unicellular nitrogen-fixing Cyanobacteria.</title>
        <authorList>
            <person name="Bandyopadhyay A."/>
            <person name="Elvitigala T."/>
            <person name="Welsh E."/>
            <person name="Stockel J."/>
            <person name="Liberton M."/>
            <person name="Min H."/>
            <person name="Sherman L.A."/>
            <person name="Pakrasi H.B."/>
        </authorList>
    </citation>
    <scope>NUCLEOTIDE SEQUENCE [LARGE SCALE GENOMIC DNA]</scope>
    <source>
        <strain>PCC 7424</strain>
    </source>
</reference>
<sequence>MKTLARILVVFTLIVGLIGFFNPLPAQAALNAVDAKLTTEFGQKIDLNNSHIREFRDLRGFYPNLASKIIKNAPYDKVEDVLNIPGLSERQQERLQANLDKFTVTEPSKELIEGDDRINPGVY</sequence>
<gene>
    <name evidence="1" type="primary">psbU</name>
    <name type="ordered locus">PCC7424_0395</name>
</gene>
<evidence type="ECO:0000255" key="1">
    <source>
        <dbReference type="HAMAP-Rule" id="MF_00589"/>
    </source>
</evidence>
<comment type="function">
    <text evidence="1">One of the extrinsic, lumenal subunits of photosystem II (PSII). PSII is a light-driven water plastoquinone oxidoreductase, using light energy to abstract electrons from H(2)O, generating a proton gradient subsequently used for ATP formation. The extrinsic proteins stabilize the structure of photosystem II oxygen-evolving complex (OEC), the ion environment of oxygen evolution and protect the OEC against heat-induced inactivation.</text>
</comment>
<comment type="subunit">
    <text evidence="1">PSII is composed of 1 copy each of membrane proteins PsbA, PsbB, PsbC, PsbD, PsbE, PsbF, PsbH, PsbI, PsbJ, PsbK, PsbL, PsbM, PsbT, PsbX, PsbY, PsbZ, Psb30/Ycf12, peripheral proteins PsbO, CyanoQ (PsbQ), PsbU, PsbV and a large number of cofactors. It forms dimeric complexes.</text>
</comment>
<comment type="subcellular location">
    <subcellularLocation>
        <location evidence="1">Cellular thylakoid membrane</location>
        <topology evidence="1">Peripheral membrane protein</topology>
        <orientation evidence="1">Lumenal side</orientation>
    </subcellularLocation>
</comment>
<comment type="similarity">
    <text evidence="1">Belongs to the PsbU family.</text>
</comment>
<name>PSBU_GLOC7</name>
<organism>
    <name type="scientific">Gloeothece citriformis (strain PCC 7424)</name>
    <name type="common">Cyanothece sp. (strain PCC 7424)</name>
    <dbReference type="NCBI Taxonomy" id="65393"/>
    <lineage>
        <taxon>Bacteria</taxon>
        <taxon>Bacillati</taxon>
        <taxon>Cyanobacteriota</taxon>
        <taxon>Cyanophyceae</taxon>
        <taxon>Oscillatoriophycideae</taxon>
        <taxon>Chroococcales</taxon>
        <taxon>Aphanothecaceae</taxon>
        <taxon>Gloeothece</taxon>
        <taxon>Gloeothece citriformis</taxon>
    </lineage>
</organism>
<keyword id="KW-0249">Electron transport</keyword>
<keyword id="KW-0472">Membrane</keyword>
<keyword id="KW-0602">Photosynthesis</keyword>
<keyword id="KW-0604">Photosystem II</keyword>
<keyword id="KW-1185">Reference proteome</keyword>
<keyword id="KW-0732">Signal</keyword>
<keyword id="KW-0793">Thylakoid</keyword>
<keyword id="KW-0813">Transport</keyword>
<feature type="signal peptide" evidence="1">
    <location>
        <begin position="1"/>
        <end position="28"/>
    </location>
</feature>
<feature type="chain" id="PRO_5000418247" description="Photosystem II extrinsic protein U">
    <location>
        <begin position="29"/>
        <end position="123"/>
    </location>
</feature>
<proteinExistence type="inferred from homology"/>
<accession>B7KC39</accession>
<dbReference type="EMBL" id="CP001291">
    <property type="protein sequence ID" value="ACK68862.1"/>
    <property type="molecule type" value="Genomic_DNA"/>
</dbReference>
<dbReference type="RefSeq" id="WP_012597812.1">
    <property type="nucleotide sequence ID" value="NC_011729.1"/>
</dbReference>
<dbReference type="SMR" id="B7KC39"/>
<dbReference type="STRING" id="65393.PCC7424_0395"/>
<dbReference type="KEGG" id="cyc:PCC7424_0395"/>
<dbReference type="eggNOG" id="COG1555">
    <property type="taxonomic scope" value="Bacteria"/>
</dbReference>
<dbReference type="HOGENOM" id="CLU_141240_1_0_3"/>
<dbReference type="OrthoDB" id="463369at2"/>
<dbReference type="Proteomes" id="UP000002384">
    <property type="component" value="Chromosome"/>
</dbReference>
<dbReference type="GO" id="GO:0019898">
    <property type="term" value="C:extrinsic component of membrane"/>
    <property type="evidence" value="ECO:0007669"/>
    <property type="project" value="InterPro"/>
</dbReference>
<dbReference type="GO" id="GO:0009654">
    <property type="term" value="C:photosystem II oxygen evolving complex"/>
    <property type="evidence" value="ECO:0007669"/>
    <property type="project" value="InterPro"/>
</dbReference>
<dbReference type="GO" id="GO:0031676">
    <property type="term" value="C:plasma membrane-derived thylakoid membrane"/>
    <property type="evidence" value="ECO:0007669"/>
    <property type="project" value="UniProtKB-SubCell"/>
</dbReference>
<dbReference type="GO" id="GO:0015979">
    <property type="term" value="P:photosynthesis"/>
    <property type="evidence" value="ECO:0007669"/>
    <property type="project" value="UniProtKB-UniRule"/>
</dbReference>
<dbReference type="GO" id="GO:0042549">
    <property type="term" value="P:photosystem II stabilization"/>
    <property type="evidence" value="ECO:0007669"/>
    <property type="project" value="InterPro"/>
</dbReference>
<dbReference type="Gene3D" id="1.10.150.320">
    <property type="entry name" value="Photosystem II 12 kDa extrinsic protein"/>
    <property type="match status" value="1"/>
</dbReference>
<dbReference type="HAMAP" id="MF_00589">
    <property type="entry name" value="PSII_PsbU"/>
    <property type="match status" value="1"/>
</dbReference>
<dbReference type="InterPro" id="IPR010527">
    <property type="entry name" value="PSII_PsbU"/>
</dbReference>
<dbReference type="NCBIfam" id="NF002708">
    <property type="entry name" value="PRK02515.1"/>
    <property type="match status" value="1"/>
</dbReference>
<dbReference type="Pfam" id="PF06514">
    <property type="entry name" value="PsbU"/>
    <property type="match status" value="1"/>
</dbReference>
<dbReference type="SUPFAM" id="SSF81585">
    <property type="entry name" value="PsbU/PolX domain-like"/>
    <property type="match status" value="1"/>
</dbReference>
<protein>
    <recommendedName>
        <fullName evidence="1">Photosystem II extrinsic protein U</fullName>
        <shortName evidence="1">PSII-U</shortName>
        <shortName evidence="1">PsbU</shortName>
    </recommendedName>
    <alternativeName>
        <fullName evidence="1">Photosystem II 12 kDa extrinsic protein</fullName>
        <shortName evidence="1">PS II complex 12 kDa extrinsic protein</shortName>
    </alternativeName>
</protein>